<comment type="function">
    <text evidence="1">ATP-dependent RNA helicase which is a subunit of the eIF4F complex involved in cap recognition and is required for mRNA binding to ribosome. In the current model of translation initiation, eIF4A unwinds RNA secondary structures in the 5'-UTR of mRNAs which is necessary to allow efficient binding of the small ribosomal subunit, and subsequent scanning for the initiator codon (By similarity).</text>
</comment>
<comment type="catalytic activity">
    <reaction>
        <text>ATP + H2O = ADP + phosphate + H(+)</text>
        <dbReference type="Rhea" id="RHEA:13065"/>
        <dbReference type="ChEBI" id="CHEBI:15377"/>
        <dbReference type="ChEBI" id="CHEBI:15378"/>
        <dbReference type="ChEBI" id="CHEBI:30616"/>
        <dbReference type="ChEBI" id="CHEBI:43474"/>
        <dbReference type="ChEBI" id="CHEBI:456216"/>
        <dbReference type="EC" id="3.6.4.13"/>
    </reaction>
</comment>
<comment type="subunit">
    <text evidence="1">Component of the eIF4F complex, which composition varies with external and internal environmental conditions. It is composed of at least eIF4A, eIF4E and eIF4G (By similarity).</text>
</comment>
<comment type="subcellular location">
    <subcellularLocation>
        <location evidence="1">Cytoplasm</location>
    </subcellularLocation>
</comment>
<comment type="domain">
    <text>The Q motif is unique to and characteristic of the DEAD box family of RNA helicases and controls ATP binding and hydrolysis.</text>
</comment>
<comment type="similarity">
    <text evidence="4">Belongs to the DEAD box helicase family. eIF4A subfamily.</text>
</comment>
<protein>
    <recommendedName>
        <fullName>ATP-dependent RNA helicase eIF4A</fullName>
        <ecNumber>3.6.4.13</ecNumber>
    </recommendedName>
    <alternativeName>
        <fullName>Eukaryotic initiation factor 4A</fullName>
        <shortName>eIF-4A</shortName>
    </alternativeName>
    <alternativeName>
        <fullName>Translation initiation factor 1</fullName>
    </alternativeName>
</protein>
<evidence type="ECO:0000250" key="1"/>
<evidence type="ECO:0000255" key="2">
    <source>
        <dbReference type="PROSITE-ProRule" id="PRU00541"/>
    </source>
</evidence>
<evidence type="ECO:0000255" key="3">
    <source>
        <dbReference type="PROSITE-ProRule" id="PRU00542"/>
    </source>
</evidence>
<evidence type="ECO:0000305" key="4"/>
<organism>
    <name type="scientific">Scheffersomyces stipitis (strain ATCC 58785 / CBS 6054 / NBRC 10063 / NRRL Y-11545)</name>
    <name type="common">Yeast</name>
    <name type="synonym">Pichia stipitis</name>
    <dbReference type="NCBI Taxonomy" id="322104"/>
    <lineage>
        <taxon>Eukaryota</taxon>
        <taxon>Fungi</taxon>
        <taxon>Dikarya</taxon>
        <taxon>Ascomycota</taxon>
        <taxon>Saccharomycotina</taxon>
        <taxon>Pichiomycetes</taxon>
        <taxon>Debaryomycetaceae</taxon>
        <taxon>Scheffersomyces</taxon>
    </lineage>
</organism>
<name>IF4A_PICST</name>
<dbReference type="EC" id="3.6.4.13"/>
<dbReference type="EMBL" id="AAVQ01000001">
    <property type="protein sequence ID" value="EAZ63353.1"/>
    <property type="molecule type" value="Genomic_DNA"/>
</dbReference>
<dbReference type="RefSeq" id="XP_001387376.1">
    <property type="nucleotide sequence ID" value="XM_001387339.1"/>
</dbReference>
<dbReference type="SMR" id="A3GFI4"/>
<dbReference type="FunCoup" id="A3GFI4">
    <property type="interactions" value="1336"/>
</dbReference>
<dbReference type="STRING" id="322104.A3GFI4"/>
<dbReference type="GeneID" id="4851033"/>
<dbReference type="KEGG" id="pic:PICST_74636"/>
<dbReference type="eggNOG" id="KOG0327">
    <property type="taxonomic scope" value="Eukaryota"/>
</dbReference>
<dbReference type="HOGENOM" id="CLU_003041_1_0_1"/>
<dbReference type="InParanoid" id="A3GFI4"/>
<dbReference type="OMA" id="FGCQALV"/>
<dbReference type="OrthoDB" id="10265785at2759"/>
<dbReference type="Proteomes" id="UP000002258">
    <property type="component" value="Chromosome 1"/>
</dbReference>
<dbReference type="GO" id="GO:0005737">
    <property type="term" value="C:cytoplasm"/>
    <property type="evidence" value="ECO:0007669"/>
    <property type="project" value="UniProtKB-SubCell"/>
</dbReference>
<dbReference type="GO" id="GO:0005524">
    <property type="term" value="F:ATP binding"/>
    <property type="evidence" value="ECO:0007669"/>
    <property type="project" value="UniProtKB-KW"/>
</dbReference>
<dbReference type="GO" id="GO:0016887">
    <property type="term" value="F:ATP hydrolysis activity"/>
    <property type="evidence" value="ECO:0007669"/>
    <property type="project" value="RHEA"/>
</dbReference>
<dbReference type="GO" id="GO:0003723">
    <property type="term" value="F:RNA binding"/>
    <property type="evidence" value="ECO:0007669"/>
    <property type="project" value="UniProtKB-KW"/>
</dbReference>
<dbReference type="GO" id="GO:0003724">
    <property type="term" value="F:RNA helicase activity"/>
    <property type="evidence" value="ECO:0007669"/>
    <property type="project" value="UniProtKB-EC"/>
</dbReference>
<dbReference type="GO" id="GO:0003743">
    <property type="term" value="F:translation initiation factor activity"/>
    <property type="evidence" value="ECO:0007669"/>
    <property type="project" value="UniProtKB-KW"/>
</dbReference>
<dbReference type="CDD" id="cd18787">
    <property type="entry name" value="SF2_C_DEAD"/>
    <property type="match status" value="1"/>
</dbReference>
<dbReference type="FunFam" id="3.40.50.300:FF:000089">
    <property type="entry name" value="Eukaryotic initiation factor 4A-II"/>
    <property type="match status" value="1"/>
</dbReference>
<dbReference type="FunFam" id="3.40.50.300:FF:000031">
    <property type="entry name" value="Eukaryotic initiation factor 4A-III"/>
    <property type="match status" value="1"/>
</dbReference>
<dbReference type="Gene3D" id="3.40.50.300">
    <property type="entry name" value="P-loop containing nucleotide triphosphate hydrolases"/>
    <property type="match status" value="2"/>
</dbReference>
<dbReference type="InterPro" id="IPR011545">
    <property type="entry name" value="DEAD/DEAH_box_helicase_dom"/>
</dbReference>
<dbReference type="InterPro" id="IPR014001">
    <property type="entry name" value="Helicase_ATP-bd"/>
</dbReference>
<dbReference type="InterPro" id="IPR001650">
    <property type="entry name" value="Helicase_C-like"/>
</dbReference>
<dbReference type="InterPro" id="IPR027417">
    <property type="entry name" value="P-loop_NTPase"/>
</dbReference>
<dbReference type="InterPro" id="IPR000629">
    <property type="entry name" value="RNA-helicase_DEAD-box_CS"/>
</dbReference>
<dbReference type="InterPro" id="IPR014014">
    <property type="entry name" value="RNA_helicase_DEAD_Q_motif"/>
</dbReference>
<dbReference type="PANTHER" id="PTHR47958">
    <property type="entry name" value="ATP-DEPENDENT RNA HELICASE DBP3"/>
    <property type="match status" value="1"/>
</dbReference>
<dbReference type="Pfam" id="PF00270">
    <property type="entry name" value="DEAD"/>
    <property type="match status" value="1"/>
</dbReference>
<dbReference type="Pfam" id="PF00271">
    <property type="entry name" value="Helicase_C"/>
    <property type="match status" value="1"/>
</dbReference>
<dbReference type="SMART" id="SM00487">
    <property type="entry name" value="DEXDc"/>
    <property type="match status" value="1"/>
</dbReference>
<dbReference type="SMART" id="SM00490">
    <property type="entry name" value="HELICc"/>
    <property type="match status" value="1"/>
</dbReference>
<dbReference type="SUPFAM" id="SSF52540">
    <property type="entry name" value="P-loop containing nucleoside triphosphate hydrolases"/>
    <property type="match status" value="1"/>
</dbReference>
<dbReference type="PROSITE" id="PS00039">
    <property type="entry name" value="DEAD_ATP_HELICASE"/>
    <property type="match status" value="1"/>
</dbReference>
<dbReference type="PROSITE" id="PS51192">
    <property type="entry name" value="HELICASE_ATP_BIND_1"/>
    <property type="match status" value="1"/>
</dbReference>
<dbReference type="PROSITE" id="PS51194">
    <property type="entry name" value="HELICASE_CTER"/>
    <property type="match status" value="1"/>
</dbReference>
<dbReference type="PROSITE" id="PS51195">
    <property type="entry name" value="Q_MOTIF"/>
    <property type="match status" value="1"/>
</dbReference>
<gene>
    <name type="primary">TIF1</name>
    <name type="synonym">TIF41</name>
    <name type="ORF">PICST_74636</name>
</gene>
<reference key="1">
    <citation type="journal article" date="2007" name="Nat. Biotechnol.">
        <title>Genome sequence of the lignocellulose-bioconverting and xylose-fermenting yeast Pichia stipitis.</title>
        <authorList>
            <person name="Jeffries T.W."/>
            <person name="Grigoriev I.V."/>
            <person name="Grimwood J."/>
            <person name="Laplaza J.M."/>
            <person name="Aerts A."/>
            <person name="Salamov A."/>
            <person name="Schmutz J."/>
            <person name="Lindquist E."/>
            <person name="Dehal P."/>
            <person name="Shapiro H."/>
            <person name="Jin Y.-S."/>
            <person name="Passoth V."/>
            <person name="Richardson P.M."/>
        </authorList>
    </citation>
    <scope>NUCLEOTIDE SEQUENCE [LARGE SCALE GENOMIC DNA]</scope>
    <source>
        <strain>ATCC 58785 / CBS 6054 / NBRC 10063 / NRRL Y-11545</strain>
    </source>
</reference>
<keyword id="KW-0067">ATP-binding</keyword>
<keyword id="KW-0963">Cytoplasm</keyword>
<keyword id="KW-0347">Helicase</keyword>
<keyword id="KW-0378">Hydrolase</keyword>
<keyword id="KW-0396">Initiation factor</keyword>
<keyword id="KW-0547">Nucleotide-binding</keyword>
<keyword id="KW-0648">Protein biosynthesis</keyword>
<keyword id="KW-1185">Reference proteome</keyword>
<keyword id="KW-0694">RNA-binding</keyword>
<feature type="chain" id="PRO_0000285135" description="ATP-dependent RNA helicase eIF4A">
    <location>
        <begin position="1"/>
        <end position="397"/>
    </location>
</feature>
<feature type="domain" description="Helicase ATP-binding" evidence="2">
    <location>
        <begin position="54"/>
        <end position="224"/>
    </location>
</feature>
<feature type="domain" description="Helicase C-terminal" evidence="3">
    <location>
        <begin position="235"/>
        <end position="396"/>
    </location>
</feature>
<feature type="short sequence motif" description="Q motif">
    <location>
        <begin position="23"/>
        <end position="51"/>
    </location>
</feature>
<feature type="short sequence motif" description="DEAD box">
    <location>
        <begin position="172"/>
        <end position="175"/>
    </location>
</feature>
<feature type="binding site" evidence="2">
    <location>
        <begin position="67"/>
        <end position="74"/>
    </location>
    <ligand>
        <name>ATP</name>
        <dbReference type="ChEBI" id="CHEBI:30616"/>
    </ligand>
</feature>
<accession>A3GFI4</accession>
<proteinExistence type="inferred from homology"/>
<sequence>MSSDGIKEIDSDLIETNYDNVVYKFDDLNLKPNIVRGIFGYGYETPSAIQQRAILPITEGRDVLAQAQSGTGKTATFTISALQRIDENEKSTQALILAPTRELALQIKNVITSIGLYLNVTVHASIGGTSMQDDIEAFRSGVQVVVGTPGRVFDMIERRYFKTEKVKMFIMDEADEMLSSGFKEQIYNIFRLLPETTQVVLLSATMPQDVLEVTTKFMNNPVRILVKKDELTLEGIKQFYINVELEDYKFDCLCDLYDSISVTQAVIFCNTRSKVEFLTTKLKAENFTVSAIHADLPQAERDTIMKEFRSGSSRILIATDLLARGIDVQQVSLVINYDLPSNKENYIHRIGRGGRFGRKGVAINFVTERDVGMMREIEQFYSTQIEEMPADIGALFN</sequence>